<organism>
    <name type="scientific">Oryza sativa subsp. indica</name>
    <name type="common">Rice</name>
    <dbReference type="NCBI Taxonomy" id="39946"/>
    <lineage>
        <taxon>Eukaryota</taxon>
        <taxon>Viridiplantae</taxon>
        <taxon>Streptophyta</taxon>
        <taxon>Embryophyta</taxon>
        <taxon>Tracheophyta</taxon>
        <taxon>Spermatophyta</taxon>
        <taxon>Magnoliopsida</taxon>
        <taxon>Liliopsida</taxon>
        <taxon>Poales</taxon>
        <taxon>Poaceae</taxon>
        <taxon>BOP clade</taxon>
        <taxon>Oryzoideae</taxon>
        <taxon>Oryzeae</taxon>
        <taxon>Oryzinae</taxon>
        <taxon>Oryza</taxon>
        <taxon>Oryza sativa</taxon>
    </lineage>
</organism>
<accession>A2XU53</accession>
<accession>Q01JQ9</accession>
<name>LIAS_ORYSI</name>
<sequence>MHGRRHLAASLARALTYAPSRSISSTPSLLQTLDPSTPSPAAAPPTAGRLAELRQRLQADAPSLGDFTYSVEVGTRKKPLPKPKWMKETIPGGAKYAGIKAKLRELKLHTVCEEARCPNLGECWSGGETGTATATIMILGDTCTRGCRFCNVKTSRTPPPPDPDEPSNVAQAIASWGLEYIVITSVDRDDLPDQGSGHFAETVQKLKVLKPEMLIEALVPDFRGDPACVEKVATSGLHVFAHNIETVEELQRNVRDHRANFKQSIDVLKLAKEYAPAGTLTKTSIMLGCGETPDQVISTMEKVRAAGVDVMTFGQYMRPSKRHMPVSEYVTPEAFERYRSLGVDMGFRYVASGPMVRSSYKAGEFYIKAMIEADRAKATTAI</sequence>
<reference key="1">
    <citation type="journal article" date="2002" name="Nature">
        <title>Sequence and analysis of rice chromosome 4.</title>
        <authorList>
            <person name="Feng Q."/>
            <person name="Zhang Y."/>
            <person name="Hao P."/>
            <person name="Wang S."/>
            <person name="Fu G."/>
            <person name="Huang Y."/>
            <person name="Li Y."/>
            <person name="Zhu J."/>
            <person name="Liu Y."/>
            <person name="Hu X."/>
            <person name="Jia P."/>
            <person name="Zhang Y."/>
            <person name="Zhao Q."/>
            <person name="Ying K."/>
            <person name="Yu S."/>
            <person name="Tang Y."/>
            <person name="Weng Q."/>
            <person name="Zhang L."/>
            <person name="Lu Y."/>
            <person name="Mu J."/>
            <person name="Lu Y."/>
            <person name="Zhang L.S."/>
            <person name="Yu Z."/>
            <person name="Fan D."/>
            <person name="Liu X."/>
            <person name="Lu T."/>
            <person name="Li C."/>
            <person name="Wu Y."/>
            <person name="Sun T."/>
            <person name="Lei H."/>
            <person name="Li T."/>
            <person name="Hu H."/>
            <person name="Guan J."/>
            <person name="Wu M."/>
            <person name="Zhang R."/>
            <person name="Zhou B."/>
            <person name="Chen Z."/>
            <person name="Chen L."/>
            <person name="Jin Z."/>
            <person name="Wang R."/>
            <person name="Yin H."/>
            <person name="Cai Z."/>
            <person name="Ren S."/>
            <person name="Lv G."/>
            <person name="Gu W."/>
            <person name="Zhu G."/>
            <person name="Tu Y."/>
            <person name="Jia J."/>
            <person name="Zhang Y."/>
            <person name="Chen J."/>
            <person name="Kang H."/>
            <person name="Chen X."/>
            <person name="Shao C."/>
            <person name="Sun Y."/>
            <person name="Hu Q."/>
            <person name="Zhang X."/>
            <person name="Zhang W."/>
            <person name="Wang L."/>
            <person name="Ding C."/>
            <person name="Sheng H."/>
            <person name="Gu J."/>
            <person name="Chen S."/>
            <person name="Ni L."/>
            <person name="Zhu F."/>
            <person name="Chen W."/>
            <person name="Lan L."/>
            <person name="Lai Y."/>
            <person name="Cheng Z."/>
            <person name="Gu M."/>
            <person name="Jiang J."/>
            <person name="Li J."/>
            <person name="Hong G."/>
            <person name="Xue Y."/>
            <person name="Han B."/>
        </authorList>
    </citation>
    <scope>NUCLEOTIDE SEQUENCE [LARGE SCALE GENOMIC DNA]</scope>
    <source>
        <strain>cv. Guang-Lu-Ai No.4</strain>
    </source>
</reference>
<reference key="2">
    <citation type="journal article" date="2005" name="PLoS Biol.">
        <title>The genomes of Oryza sativa: a history of duplications.</title>
        <authorList>
            <person name="Yu J."/>
            <person name="Wang J."/>
            <person name="Lin W."/>
            <person name="Li S."/>
            <person name="Li H."/>
            <person name="Zhou J."/>
            <person name="Ni P."/>
            <person name="Dong W."/>
            <person name="Hu S."/>
            <person name="Zeng C."/>
            <person name="Zhang J."/>
            <person name="Zhang Y."/>
            <person name="Li R."/>
            <person name="Xu Z."/>
            <person name="Li S."/>
            <person name="Li X."/>
            <person name="Zheng H."/>
            <person name="Cong L."/>
            <person name="Lin L."/>
            <person name="Yin J."/>
            <person name="Geng J."/>
            <person name="Li G."/>
            <person name="Shi J."/>
            <person name="Liu J."/>
            <person name="Lv H."/>
            <person name="Li J."/>
            <person name="Wang J."/>
            <person name="Deng Y."/>
            <person name="Ran L."/>
            <person name="Shi X."/>
            <person name="Wang X."/>
            <person name="Wu Q."/>
            <person name="Li C."/>
            <person name="Ren X."/>
            <person name="Wang J."/>
            <person name="Wang X."/>
            <person name="Li D."/>
            <person name="Liu D."/>
            <person name="Zhang X."/>
            <person name="Ji Z."/>
            <person name="Zhao W."/>
            <person name="Sun Y."/>
            <person name="Zhang Z."/>
            <person name="Bao J."/>
            <person name="Han Y."/>
            <person name="Dong L."/>
            <person name="Ji J."/>
            <person name="Chen P."/>
            <person name="Wu S."/>
            <person name="Liu J."/>
            <person name="Xiao Y."/>
            <person name="Bu D."/>
            <person name="Tan J."/>
            <person name="Yang L."/>
            <person name="Ye C."/>
            <person name="Zhang J."/>
            <person name="Xu J."/>
            <person name="Zhou Y."/>
            <person name="Yu Y."/>
            <person name="Zhang B."/>
            <person name="Zhuang S."/>
            <person name="Wei H."/>
            <person name="Liu B."/>
            <person name="Lei M."/>
            <person name="Yu H."/>
            <person name="Li Y."/>
            <person name="Xu H."/>
            <person name="Wei S."/>
            <person name="He X."/>
            <person name="Fang L."/>
            <person name="Zhang Z."/>
            <person name="Zhang Y."/>
            <person name="Huang X."/>
            <person name="Su Z."/>
            <person name="Tong W."/>
            <person name="Li J."/>
            <person name="Tong Z."/>
            <person name="Li S."/>
            <person name="Ye J."/>
            <person name="Wang L."/>
            <person name="Fang L."/>
            <person name="Lei T."/>
            <person name="Chen C.-S."/>
            <person name="Chen H.-C."/>
            <person name="Xu Z."/>
            <person name="Li H."/>
            <person name="Huang H."/>
            <person name="Zhang F."/>
            <person name="Xu H."/>
            <person name="Li N."/>
            <person name="Zhao C."/>
            <person name="Li S."/>
            <person name="Dong L."/>
            <person name="Huang Y."/>
            <person name="Li L."/>
            <person name="Xi Y."/>
            <person name="Qi Q."/>
            <person name="Li W."/>
            <person name="Zhang B."/>
            <person name="Hu W."/>
            <person name="Zhang Y."/>
            <person name="Tian X."/>
            <person name="Jiao Y."/>
            <person name="Liang X."/>
            <person name="Jin J."/>
            <person name="Gao L."/>
            <person name="Zheng W."/>
            <person name="Hao B."/>
            <person name="Liu S.-M."/>
            <person name="Wang W."/>
            <person name="Yuan L."/>
            <person name="Cao M."/>
            <person name="McDermott J."/>
            <person name="Samudrala R."/>
            <person name="Wang J."/>
            <person name="Wong G.K.-S."/>
            <person name="Yang H."/>
        </authorList>
    </citation>
    <scope>NUCLEOTIDE SEQUENCE [LARGE SCALE GENOMIC DNA]</scope>
    <source>
        <strain>cv. 93-11</strain>
    </source>
</reference>
<feature type="transit peptide" description="Mitochondrion" evidence="1">
    <location>
        <begin position="1"/>
        <end position="30"/>
    </location>
</feature>
<feature type="chain" id="PRO_0000398848" description="Lipoyl synthase, mitochondrial">
    <location>
        <begin position="31"/>
        <end position="382"/>
    </location>
</feature>
<feature type="domain" description="Radical SAM core" evidence="2">
    <location>
        <begin position="128"/>
        <end position="348"/>
    </location>
</feature>
<feature type="region of interest" description="Disordered" evidence="3">
    <location>
        <begin position="25"/>
        <end position="47"/>
    </location>
</feature>
<feature type="compositionally biased region" description="Polar residues" evidence="3">
    <location>
        <begin position="25"/>
        <end position="34"/>
    </location>
</feature>
<feature type="binding site" evidence="1">
    <location>
        <position position="112"/>
    </location>
    <ligand>
        <name>[4Fe-4S] cluster</name>
        <dbReference type="ChEBI" id="CHEBI:49883"/>
        <label>1</label>
    </ligand>
</feature>
<feature type="binding site" evidence="1">
    <location>
        <position position="117"/>
    </location>
    <ligand>
        <name>[4Fe-4S] cluster</name>
        <dbReference type="ChEBI" id="CHEBI:49883"/>
        <label>1</label>
    </ligand>
</feature>
<feature type="binding site" evidence="1">
    <location>
        <position position="123"/>
    </location>
    <ligand>
        <name>[4Fe-4S] cluster</name>
        <dbReference type="ChEBI" id="CHEBI:49883"/>
        <label>1</label>
    </ligand>
</feature>
<feature type="binding site" evidence="1">
    <location>
        <position position="143"/>
    </location>
    <ligand>
        <name>[4Fe-4S] cluster</name>
        <dbReference type="ChEBI" id="CHEBI:49883"/>
        <label>2</label>
        <note>4Fe-4S-S-AdoMet</note>
    </ligand>
</feature>
<feature type="binding site" evidence="1">
    <location>
        <position position="147"/>
    </location>
    <ligand>
        <name>[4Fe-4S] cluster</name>
        <dbReference type="ChEBI" id="CHEBI:49883"/>
        <label>2</label>
        <note>4Fe-4S-S-AdoMet</note>
    </ligand>
</feature>
<feature type="binding site" evidence="1">
    <location>
        <position position="150"/>
    </location>
    <ligand>
        <name>[4Fe-4S] cluster</name>
        <dbReference type="ChEBI" id="CHEBI:49883"/>
        <label>2</label>
        <note>4Fe-4S-S-AdoMet</note>
    </ligand>
</feature>
<feature type="binding site" evidence="1">
    <location>
        <position position="359"/>
    </location>
    <ligand>
        <name>[4Fe-4S] cluster</name>
        <dbReference type="ChEBI" id="CHEBI:49883"/>
        <label>1</label>
    </ligand>
</feature>
<feature type="sequence conflict" description="In Ref. 1; CAH67016." evidence="4" ref="1">
    <original>TLD</original>
    <variation>NLE</variation>
    <location>
        <begin position="32"/>
        <end position="34"/>
    </location>
</feature>
<feature type="sequence conflict" description="In Ref. 1; CAH67016." evidence="4" ref="1">
    <original>AAAPP</original>
    <variation>EDDPT</variation>
    <location>
        <begin position="41"/>
        <end position="45"/>
    </location>
</feature>
<feature type="sequence conflict" description="In Ref. 1; CAH67016." evidence="4" ref="1">
    <original>L</original>
    <variation>I</variation>
    <location>
        <position position="50"/>
    </location>
</feature>
<feature type="sequence conflict" description="In Ref. 1; CAH67016." evidence="4" ref="1">
    <original>Q</original>
    <variation>K</variation>
    <location>
        <position position="55"/>
    </location>
</feature>
<dbReference type="EC" id="2.8.1.8" evidence="1"/>
<dbReference type="EMBL" id="CR855164">
    <property type="protein sequence ID" value="CAH67016.1"/>
    <property type="molecule type" value="Genomic_DNA"/>
</dbReference>
<dbReference type="EMBL" id="CM000129">
    <property type="protein sequence ID" value="EAY94363.1"/>
    <property type="status" value="ALT_SEQ"/>
    <property type="molecule type" value="Genomic_DNA"/>
</dbReference>
<dbReference type="SMR" id="A2XU53"/>
<dbReference type="STRING" id="39946.A2XU53"/>
<dbReference type="EnsemblPlants" id="OsGoSa_04g0015240.01">
    <property type="protein sequence ID" value="OsGoSa_04g0015240.01"/>
    <property type="gene ID" value="OsGoSa_04g0015240"/>
</dbReference>
<dbReference type="EnsemblPlants" id="OsIR64_04g0014850.01">
    <property type="protein sequence ID" value="OsIR64_04g0014850.01"/>
    <property type="gene ID" value="OsIR64_04g0014850"/>
</dbReference>
<dbReference type="EnsemblPlants" id="OsKYG_04g0015280.01">
    <property type="protein sequence ID" value="OsKYG_04g0015280.01"/>
    <property type="gene ID" value="OsKYG_04g0015280"/>
</dbReference>
<dbReference type="EnsemblPlants" id="OsPr106_04g0016050.01">
    <property type="protein sequence ID" value="OsPr106_04g0016050.01"/>
    <property type="gene ID" value="OsPr106_04g0016050"/>
</dbReference>
<dbReference type="EnsemblPlants" id="OsZS97_04G016200_01">
    <property type="protein sequence ID" value="OsZS97_04G016200_01"/>
    <property type="gene ID" value="OsZS97_04G016200"/>
</dbReference>
<dbReference type="Gramene" id="OsGoSa_04g0015240.01">
    <property type="protein sequence ID" value="OsGoSa_04g0015240.01"/>
    <property type="gene ID" value="OsGoSa_04g0015240"/>
</dbReference>
<dbReference type="Gramene" id="OsIR64_04g0014850.01">
    <property type="protein sequence ID" value="OsIR64_04g0014850.01"/>
    <property type="gene ID" value="OsIR64_04g0014850"/>
</dbReference>
<dbReference type="Gramene" id="OsKYG_04g0015280.01">
    <property type="protein sequence ID" value="OsKYG_04g0015280.01"/>
    <property type="gene ID" value="OsKYG_04g0015280"/>
</dbReference>
<dbReference type="Gramene" id="OsPr106_04g0016050.01">
    <property type="protein sequence ID" value="OsPr106_04g0016050.01"/>
    <property type="gene ID" value="OsPr106_04g0016050"/>
</dbReference>
<dbReference type="Gramene" id="OsZS97_04G016200_01">
    <property type="protein sequence ID" value="OsZS97_04G016200_01"/>
    <property type="gene ID" value="OsZS97_04G016200"/>
</dbReference>
<dbReference type="HOGENOM" id="CLU_033144_1_1_1"/>
<dbReference type="OrthoDB" id="3231at2759"/>
<dbReference type="UniPathway" id="UPA00538">
    <property type="reaction ID" value="UER00593"/>
</dbReference>
<dbReference type="Proteomes" id="UP000007015">
    <property type="component" value="Chromosome 4"/>
</dbReference>
<dbReference type="GO" id="GO:0005739">
    <property type="term" value="C:mitochondrion"/>
    <property type="evidence" value="ECO:0007669"/>
    <property type="project" value="UniProtKB-SubCell"/>
</dbReference>
<dbReference type="GO" id="GO:0051539">
    <property type="term" value="F:4 iron, 4 sulfur cluster binding"/>
    <property type="evidence" value="ECO:0007669"/>
    <property type="project" value="UniProtKB-UniRule"/>
</dbReference>
<dbReference type="GO" id="GO:0016992">
    <property type="term" value="F:lipoate synthase activity"/>
    <property type="evidence" value="ECO:0007669"/>
    <property type="project" value="UniProtKB-UniRule"/>
</dbReference>
<dbReference type="GO" id="GO:0046872">
    <property type="term" value="F:metal ion binding"/>
    <property type="evidence" value="ECO:0007669"/>
    <property type="project" value="UniProtKB-KW"/>
</dbReference>
<dbReference type="CDD" id="cd01335">
    <property type="entry name" value="Radical_SAM"/>
    <property type="match status" value="1"/>
</dbReference>
<dbReference type="FunFam" id="3.20.20.70:FF:000125">
    <property type="entry name" value="Lipoyl synthase, mitochondrial"/>
    <property type="match status" value="1"/>
</dbReference>
<dbReference type="Gene3D" id="3.20.20.70">
    <property type="entry name" value="Aldolase class I"/>
    <property type="match status" value="1"/>
</dbReference>
<dbReference type="HAMAP" id="MF_00206">
    <property type="entry name" value="Lipoyl_synth"/>
    <property type="match status" value="1"/>
</dbReference>
<dbReference type="HAMAP" id="MF_03128">
    <property type="entry name" value="Lipoyl_synth_plantM"/>
    <property type="match status" value="1"/>
</dbReference>
<dbReference type="InterPro" id="IPR013785">
    <property type="entry name" value="Aldolase_TIM"/>
</dbReference>
<dbReference type="InterPro" id="IPR006638">
    <property type="entry name" value="Elp3/MiaA/NifB-like_rSAM"/>
</dbReference>
<dbReference type="InterPro" id="IPR031691">
    <property type="entry name" value="LIAS_N"/>
</dbReference>
<dbReference type="InterPro" id="IPR003698">
    <property type="entry name" value="Lipoyl_synth"/>
</dbReference>
<dbReference type="InterPro" id="IPR027527">
    <property type="entry name" value="Lipoyl_synth_mt"/>
</dbReference>
<dbReference type="InterPro" id="IPR007197">
    <property type="entry name" value="rSAM"/>
</dbReference>
<dbReference type="NCBIfam" id="TIGR00510">
    <property type="entry name" value="lipA"/>
    <property type="match status" value="1"/>
</dbReference>
<dbReference type="NCBIfam" id="NF004019">
    <property type="entry name" value="PRK05481.1"/>
    <property type="match status" value="1"/>
</dbReference>
<dbReference type="NCBIfam" id="NF009544">
    <property type="entry name" value="PRK12928.1"/>
    <property type="match status" value="1"/>
</dbReference>
<dbReference type="PANTHER" id="PTHR10949">
    <property type="entry name" value="LIPOYL SYNTHASE"/>
    <property type="match status" value="1"/>
</dbReference>
<dbReference type="PANTHER" id="PTHR10949:SF0">
    <property type="entry name" value="LIPOYL SYNTHASE, MITOCHONDRIAL"/>
    <property type="match status" value="1"/>
</dbReference>
<dbReference type="Pfam" id="PF16881">
    <property type="entry name" value="LIAS_N"/>
    <property type="match status" value="1"/>
</dbReference>
<dbReference type="Pfam" id="PF04055">
    <property type="entry name" value="Radical_SAM"/>
    <property type="match status" value="1"/>
</dbReference>
<dbReference type="SFLD" id="SFLDF00271">
    <property type="entry name" value="lipoyl_synthase"/>
    <property type="match status" value="1"/>
</dbReference>
<dbReference type="SFLD" id="SFLDS00029">
    <property type="entry name" value="Radical_SAM"/>
    <property type="match status" value="1"/>
</dbReference>
<dbReference type="SMART" id="SM00729">
    <property type="entry name" value="Elp3"/>
    <property type="match status" value="1"/>
</dbReference>
<dbReference type="SUPFAM" id="SSF102114">
    <property type="entry name" value="Radical SAM enzymes"/>
    <property type="match status" value="1"/>
</dbReference>
<dbReference type="PROSITE" id="PS51918">
    <property type="entry name" value="RADICAL_SAM"/>
    <property type="match status" value="1"/>
</dbReference>
<comment type="function">
    <text evidence="1">Catalyzes the radical-mediated insertion of two sulfur atoms into the C-6 and C-8 positions of the octanoyl moiety bound to the lipoyl domains of lipoate-dependent enzymes, thereby converting the octanoylated domains into lipoylated derivatives.</text>
</comment>
<comment type="catalytic activity">
    <reaction evidence="1">
        <text>[[Fe-S] cluster scaffold protein carrying a second [4Fe-4S](2+) cluster] + N(6)-octanoyl-L-lysyl-[protein] + 2 oxidized [2Fe-2S]-[ferredoxin] + 2 S-adenosyl-L-methionine + 4 H(+) = [[Fe-S] cluster scaffold protein] + N(6)-[(R)-dihydrolipoyl]-L-lysyl-[protein] + 4 Fe(3+) + 2 hydrogen sulfide + 2 5'-deoxyadenosine + 2 L-methionine + 2 reduced [2Fe-2S]-[ferredoxin]</text>
        <dbReference type="Rhea" id="RHEA:16585"/>
        <dbReference type="Rhea" id="RHEA-COMP:9928"/>
        <dbReference type="Rhea" id="RHEA-COMP:10000"/>
        <dbReference type="Rhea" id="RHEA-COMP:10001"/>
        <dbReference type="Rhea" id="RHEA-COMP:10475"/>
        <dbReference type="Rhea" id="RHEA-COMP:14568"/>
        <dbReference type="Rhea" id="RHEA-COMP:14569"/>
        <dbReference type="ChEBI" id="CHEBI:15378"/>
        <dbReference type="ChEBI" id="CHEBI:17319"/>
        <dbReference type="ChEBI" id="CHEBI:29034"/>
        <dbReference type="ChEBI" id="CHEBI:29919"/>
        <dbReference type="ChEBI" id="CHEBI:33722"/>
        <dbReference type="ChEBI" id="CHEBI:33737"/>
        <dbReference type="ChEBI" id="CHEBI:33738"/>
        <dbReference type="ChEBI" id="CHEBI:57844"/>
        <dbReference type="ChEBI" id="CHEBI:59789"/>
        <dbReference type="ChEBI" id="CHEBI:78809"/>
        <dbReference type="ChEBI" id="CHEBI:83100"/>
        <dbReference type="EC" id="2.8.1.8"/>
    </reaction>
</comment>
<comment type="cofactor">
    <cofactor evidence="1">
        <name>[4Fe-4S] cluster</name>
        <dbReference type="ChEBI" id="CHEBI:49883"/>
    </cofactor>
    <text evidence="1">Binds 2 [4Fe-4S] clusters per subunit. One cluster is coordinated with 3 cysteines and an exchangeable S-adenosyl-L-methionine.</text>
</comment>
<comment type="pathway">
    <text evidence="1">Protein modification; protein lipoylation via endogenous pathway; protein N(6)-(lipoyl)lysine from octanoyl-[acyl-carrier-protein]: step 2/2.</text>
</comment>
<comment type="subcellular location">
    <subcellularLocation>
        <location evidence="1">Mitochondrion</location>
    </subcellularLocation>
</comment>
<comment type="similarity">
    <text evidence="1">Belongs to the radical SAM superfamily. Lipoyl synthase family.</text>
</comment>
<comment type="sequence caution" evidence="4">
    <conflict type="erroneous termination">
        <sequence resource="EMBL-CDS" id="EAY94363"/>
    </conflict>
    <text>Truncated C-terminus.</text>
</comment>
<keyword id="KW-0004">4Fe-4S</keyword>
<keyword id="KW-0408">Iron</keyword>
<keyword id="KW-0411">Iron-sulfur</keyword>
<keyword id="KW-0479">Metal-binding</keyword>
<keyword id="KW-0496">Mitochondrion</keyword>
<keyword id="KW-1185">Reference proteome</keyword>
<keyword id="KW-0949">S-adenosyl-L-methionine</keyword>
<keyword id="KW-0808">Transferase</keyword>
<keyword id="KW-0809">Transit peptide</keyword>
<protein>
    <recommendedName>
        <fullName evidence="1">Lipoyl synthase, mitochondrial</fullName>
        <ecNumber evidence="1">2.8.1.8</ecNumber>
    </recommendedName>
    <alternativeName>
        <fullName evidence="1">Lipoate synthase</fullName>
        <shortName evidence="1">LS</shortName>
        <shortName evidence="1">Lip-syn</shortName>
    </alternativeName>
    <alternativeName>
        <fullName evidence="1">Lipoic acid synthase</fullName>
    </alternativeName>
</protein>
<gene>
    <name evidence="1" type="primary">LIP1</name>
    <name type="ORF">H0523F07.4</name>
    <name type="ORF">OsI_16128</name>
</gene>
<evidence type="ECO:0000255" key="1">
    <source>
        <dbReference type="HAMAP-Rule" id="MF_03128"/>
    </source>
</evidence>
<evidence type="ECO:0000255" key="2">
    <source>
        <dbReference type="PROSITE-ProRule" id="PRU01266"/>
    </source>
</evidence>
<evidence type="ECO:0000256" key="3">
    <source>
        <dbReference type="SAM" id="MobiDB-lite"/>
    </source>
</evidence>
<evidence type="ECO:0000305" key="4"/>
<proteinExistence type="inferred from homology"/>